<feature type="chain" id="PRO_0000450203" description="ATP synthase subunit beta, chloroplastic">
    <location>
        <begin position="1"/>
        <end position="20" status="greater than"/>
    </location>
</feature>
<feature type="region of interest" description="Disordered" evidence="1">
    <location>
        <begin position="1"/>
        <end position="20"/>
    </location>
</feature>
<feature type="compositionally biased region" description="Polar residues" evidence="1">
    <location>
        <begin position="1"/>
        <end position="10"/>
    </location>
</feature>
<feature type="non-terminal residue" evidence="3">
    <location>
        <position position="20"/>
    </location>
</feature>
<protein>
    <recommendedName>
        <fullName evidence="5">ATP synthase subunit beta, chloroplastic</fullName>
        <ecNumber evidence="5">7.1.2.2</ecNumber>
    </recommendedName>
    <alternativeName>
        <fullName evidence="5">ATP synthase F1 subunit beta</fullName>
    </alternativeName>
    <alternativeName>
        <fullName evidence="5">F-ATPase subunit beta</fullName>
    </alternativeName>
</protein>
<keyword id="KW-0066">ATP synthesis</keyword>
<keyword id="KW-0150">Chloroplast</keyword>
<keyword id="KW-0903">Direct protein sequencing</keyword>
<keyword id="KW-0375">Hydrogen ion transport</keyword>
<keyword id="KW-0406">Ion transport</keyword>
<keyword id="KW-0472">Membrane</keyword>
<keyword id="KW-0934">Plastid</keyword>
<keyword id="KW-0793">Thylakoid</keyword>
<keyword id="KW-1278">Translocase</keyword>
<keyword id="KW-0813">Transport</keyword>
<sequence length="20" mass="2196">METTNESLGYTDQIIGPVLD</sequence>
<accession>C0HLQ4</accession>
<reference evidence="5" key="1">
    <citation type="journal article" date="2013" name="Biosci. Biotechnol. Biochem.">
        <title>Growth-phase dependent variation in photosynthetic activity and cellular protein expression profile in the harmful raphidophyte Chattonella antiqua.</title>
        <authorList>
            <person name="Qiu X."/>
            <person name="Shimasaki Y."/>
            <person name="Tsuyama M."/>
            <person name="Yamada T."/>
            <person name="Kuwahara R."/>
            <person name="Kawaguchi M."/>
            <person name="Honda M."/>
            <person name="Gunjikake H."/>
            <person name="Tasmin R."/>
            <person name="Shimizu M."/>
            <person name="Sato Y."/>
            <person name="Kato-Unoki Y."/>
            <person name="Nakashima T."/>
            <person name="Matsubara T."/>
            <person name="Yamasaki Y."/>
            <person name="Ichinose H."/>
            <person name="Wariishi H."/>
            <person name="Honjo T."/>
            <person name="Oshima Y."/>
        </authorList>
    </citation>
    <scope>PROTEIN SEQUENCE</scope>
    <source>
        <strain evidence="3">NIES-1</strain>
    </source>
</reference>
<reference evidence="5" key="2">
    <citation type="journal article" date="2020" name="J. Exp. Mar. Biol. Ecol.">
        <title>Diurnal variations in expression of photosynthesis-related proteins in the harmful Raphidophyceae Chattonella marina var. antiqua.</title>
        <authorList>
            <person name="Qiu X."/>
            <person name="Mukai K."/>
            <person name="Shimasaki Y."/>
            <person name="Wu M."/>
            <person name="Chen C."/>
            <person name="Lu Y."/>
            <person name="Ichinose H."/>
            <person name="Nakashima T."/>
            <person name="Kato-Unoki Y."/>
            <person name="Oshima Y."/>
        </authorList>
    </citation>
    <scope>PROTEIN SEQUENCE</scope>
    <scope>INDUCTION</scope>
    <source>
        <strain evidence="4">NIES-1</strain>
    </source>
</reference>
<dbReference type="EC" id="7.1.2.2" evidence="5"/>
<dbReference type="GO" id="GO:0009535">
    <property type="term" value="C:chloroplast thylakoid membrane"/>
    <property type="evidence" value="ECO:0007669"/>
    <property type="project" value="UniProtKB-SubCell"/>
</dbReference>
<dbReference type="GO" id="GO:0006754">
    <property type="term" value="P:ATP biosynthetic process"/>
    <property type="evidence" value="ECO:0007669"/>
    <property type="project" value="UniProtKB-KW"/>
</dbReference>
<dbReference type="GO" id="GO:1902600">
    <property type="term" value="P:proton transmembrane transport"/>
    <property type="evidence" value="ECO:0007669"/>
    <property type="project" value="UniProtKB-KW"/>
</dbReference>
<organism>
    <name type="scientific">Chattonella marina var. antiqua</name>
    <name type="common">Red tide flagellate</name>
    <name type="synonym">Chattonella antiqua</name>
    <dbReference type="NCBI Taxonomy" id="859642"/>
    <lineage>
        <taxon>Eukaryota</taxon>
        <taxon>Sar</taxon>
        <taxon>Stramenopiles</taxon>
        <taxon>Ochrophyta</taxon>
        <taxon>Raphidophyceae</taxon>
        <taxon>Chattonellales</taxon>
        <taxon>Chattonellaceae</taxon>
        <taxon>Chattonella</taxon>
    </lineage>
</organism>
<comment type="function">
    <text evidence="5">Produces ATP from ADP in the presence of a proton gradient across the membrane. The catalytic sites are hosted primarily by the beta subunits.</text>
</comment>
<comment type="catalytic activity">
    <reaction evidence="5">
        <text>ATP + H2O + 4 H(+)(in) = ADP + phosphate + 5 H(+)(out)</text>
        <dbReference type="Rhea" id="RHEA:57720"/>
        <dbReference type="ChEBI" id="CHEBI:15377"/>
        <dbReference type="ChEBI" id="CHEBI:15378"/>
        <dbReference type="ChEBI" id="CHEBI:30616"/>
        <dbReference type="ChEBI" id="CHEBI:43474"/>
        <dbReference type="ChEBI" id="CHEBI:456216"/>
        <dbReference type="EC" id="7.1.2.2"/>
    </reaction>
</comment>
<comment type="subunit">
    <text evidence="5">F-type ATPases have 2 components, CF(1) - the catalytic core - and CF(0) - the membrane proton channel. CF(1) has five subunits: alpha(3), beta(3), gamma(1), delta(1), epsilon(1). CF(0) has four main subunits: a(1), b(1), b'(1) and c(9-12).</text>
</comment>
<comment type="subcellular location">
    <subcellularLocation>
        <location evidence="5">Plastid</location>
        <location evidence="5">Chloroplast thylakoid membrane</location>
        <topology evidence="5">Peripheral membrane protein</topology>
    </subcellularLocation>
</comment>
<comment type="induction">
    <text evidence="2">Expression shows a diurnal pattern of oscillation across the 24-hour light-dark, with increased levels during the light period (at protein level).</text>
</comment>
<comment type="similarity">
    <text evidence="5">Belongs to the ATPase alpha/beta chains family.</text>
</comment>
<name>ATPB_CHAMQ</name>
<proteinExistence type="evidence at protein level"/>
<evidence type="ECO:0000256" key="1">
    <source>
        <dbReference type="SAM" id="MobiDB-lite"/>
    </source>
</evidence>
<evidence type="ECO:0000269" key="2">
    <source ref="2"/>
</evidence>
<evidence type="ECO:0000303" key="3">
    <source>
    </source>
</evidence>
<evidence type="ECO:0000303" key="4">
    <source ref="2"/>
</evidence>
<evidence type="ECO:0000305" key="5"/>